<gene>
    <name type="primary">GARP</name>
</gene>
<keyword id="KW-0461">Malaria</keyword>
<keyword id="KW-0677">Repeat</keyword>
<keyword id="KW-0732">Signal</keyword>
<evidence type="ECO:0000256" key="1">
    <source>
        <dbReference type="SAM" id="MobiDB-lite"/>
    </source>
</evidence>
<reference key="1">
    <citation type="journal article" date="1988" name="Mol. Biochem. Parasitol.">
        <title>Structure of a Plasmodium falciparum gene that encodes a glutamic acid-rich protein (GARP).</title>
        <authorList>
            <person name="Triglia T."/>
            <person name="Stahl H.-D."/>
            <person name="Crewther P.E."/>
            <person name="Silva A."/>
            <person name="Anders R.F."/>
            <person name="Kemp D.J."/>
        </authorList>
    </citation>
    <scope>NUCLEOTIDE SEQUENCE [GENOMIC DNA]</scope>
</reference>
<sequence>MNVLFLSYNICILFFVVCTLNFSTKCFSNGLLKNQNILNKSFDSITGRLLNETELEKNKDDNSKSETLLKEEKDEKDDVPTTSNDNLKNAHNNNEISSSTDPTNIINVNDKDNENSVDKKKDKKEKKHKKDKKEKKEKKDKKEKKDKKEKKHKKEKKHKKDKKKKENSEVMSLYKTGQHKPKNATEHGEENLDEEMVSEINNNAQGGLLLSSPYQYREQGGCGIISSVHETSNDTKDNDKENISEDKKEDHQQEEMLKTLDKKERKQKEKEMKEQEKIEKKKKKQEEKEKKKQEKERKKQEKKERKQKEKEMKKQKKIEKERKKKEEKEKKKKKHDKENEETMQQPDQTSEETNNEIMVPLPSPLTDVTTPEEHKEGEHKEEEHKEGEHKEGEHKEEEHKEEEHKKEEHKSKEHKSKGKKDKGKKDKGKHKKAKKEKVKKHVVKNVIEDEDKDGVEIINLEDKEACEEQHITVESRPLSQPQCKLIDEPEQLTLMDKSKVEEKNLSIQEQLIGTIGRVNVVPRRDNHKKKMAKIEEAELQKQKHVDKEEDKKEESKEVQEESKEVQEDEEEVEEDEEEEEEEEEEEEEEEEEEEEEEEEEEEEEEDEDEEDEDDAEEDEDDAEEDEDDAEEDDDEEDDDEEDDDEDEDEDEEDEEEEEEEEEESEKKIKRNLRKNAKI</sequence>
<dbReference type="EMBL" id="J03998">
    <property type="protein sequence ID" value="AAA29605.1"/>
    <property type="molecule type" value="Genomic_DNA"/>
</dbReference>
<dbReference type="PIR" id="A54514">
    <property type="entry name" value="A54514"/>
</dbReference>
<accession>P13816</accession>
<name>GARP_PLAFF</name>
<proteinExistence type="predicted"/>
<organism>
    <name type="scientific">Plasmodium falciparum (isolate FC27 / Papua New Guinea)</name>
    <dbReference type="NCBI Taxonomy" id="5837"/>
    <lineage>
        <taxon>Eukaryota</taxon>
        <taxon>Sar</taxon>
        <taxon>Alveolata</taxon>
        <taxon>Apicomplexa</taxon>
        <taxon>Aconoidasida</taxon>
        <taxon>Haemosporida</taxon>
        <taxon>Plasmodiidae</taxon>
        <taxon>Plasmodium</taxon>
        <taxon>Plasmodium (Laverania)</taxon>
    </lineage>
</organism>
<protein>
    <recommendedName>
        <fullName>Glutamic acid-rich protein</fullName>
    </recommendedName>
</protein>
<feature type="signal peptide">
    <location>
        <begin position="1"/>
        <end position="25"/>
    </location>
</feature>
<feature type="chain" id="PRO_0000024538" description="Glutamic acid-rich protein">
    <location>
        <begin position="26"/>
        <end position="678"/>
    </location>
</feature>
<feature type="repeat" description="1-1">
    <location>
        <begin position="120"/>
        <end position="122"/>
    </location>
</feature>
<feature type="repeat" description="1-2">
    <location>
        <begin position="123"/>
        <end position="125"/>
    </location>
</feature>
<feature type="repeat" description="1-3">
    <location>
        <begin position="126"/>
        <end position="128"/>
    </location>
</feature>
<feature type="repeat" description="1-4">
    <location>
        <begin position="129"/>
        <end position="131"/>
    </location>
</feature>
<feature type="repeat" description="1-5">
    <location>
        <begin position="132"/>
        <end position="134"/>
    </location>
</feature>
<feature type="repeat" description="1-6">
    <location>
        <begin position="135"/>
        <end position="137"/>
    </location>
</feature>
<feature type="repeat" description="1-7">
    <location>
        <begin position="138"/>
        <end position="140"/>
    </location>
</feature>
<feature type="repeat" description="1-8">
    <location>
        <begin position="141"/>
        <end position="143"/>
    </location>
</feature>
<feature type="repeat" description="1-9">
    <location>
        <begin position="144"/>
        <end position="146"/>
    </location>
</feature>
<feature type="repeat" description="1-10">
    <location>
        <begin position="147"/>
        <end position="149"/>
    </location>
</feature>
<feature type="repeat" description="1-11">
    <location>
        <begin position="150"/>
        <end position="152"/>
    </location>
</feature>
<feature type="repeat" description="1-12">
    <location>
        <begin position="153"/>
        <end position="155"/>
    </location>
</feature>
<feature type="repeat" description="1-13">
    <location>
        <begin position="156"/>
        <end position="158"/>
    </location>
</feature>
<feature type="repeat" description="1-14">
    <location>
        <begin position="159"/>
        <end position="161"/>
    </location>
</feature>
<feature type="repeat" description="1-15">
    <location>
        <begin position="162"/>
        <end position="164"/>
    </location>
</feature>
<feature type="repeat" description="2-1">
    <location>
        <begin position="372"/>
        <end position="376"/>
    </location>
</feature>
<feature type="repeat" description="2-2">
    <location>
        <begin position="377"/>
        <end position="381"/>
    </location>
</feature>
<feature type="repeat" description="2-3">
    <location>
        <begin position="382"/>
        <end position="386"/>
    </location>
</feature>
<feature type="repeat" description="2-4">
    <location>
        <begin position="387"/>
        <end position="391"/>
    </location>
</feature>
<feature type="repeat" description="2-5">
    <location>
        <begin position="392"/>
        <end position="396"/>
    </location>
</feature>
<feature type="repeat" description="2-6">
    <location>
        <begin position="397"/>
        <end position="401"/>
    </location>
</feature>
<feature type="repeat" description="2-7">
    <location>
        <begin position="402"/>
        <end position="406"/>
    </location>
</feature>
<feature type="repeat" description="2-8">
    <location>
        <begin position="407"/>
        <end position="411"/>
    </location>
</feature>
<feature type="repeat" description="2-9">
    <location>
        <begin position="412"/>
        <end position="416"/>
    </location>
</feature>
<feature type="repeat" description="3-1">
    <location>
        <begin position="417"/>
        <end position="421"/>
    </location>
</feature>
<feature type="repeat" description="3-2">
    <location>
        <begin position="422"/>
        <end position="426"/>
    </location>
</feature>
<feature type="repeat" description="3-3">
    <location>
        <begin position="427"/>
        <end position="431"/>
    </location>
</feature>
<feature type="repeat" description="3-4">
    <location>
        <begin position="432"/>
        <end position="436"/>
    </location>
</feature>
<feature type="repeat" description="3-5">
    <location>
        <begin position="437"/>
        <end position="441"/>
    </location>
</feature>
<feature type="region of interest" description="Disordered" evidence="1">
    <location>
        <begin position="56"/>
        <end position="194"/>
    </location>
</feature>
<feature type="region of interest" description="15 X 3 AA tandem repeats of K-K-[DEHK]">
    <location>
        <begin position="120"/>
        <end position="164"/>
    </location>
</feature>
<feature type="region of interest" description="Disordered" evidence="1">
    <location>
        <begin position="225"/>
        <end position="445"/>
    </location>
</feature>
<feature type="region of interest" description="9 X 5 AA tandem repeats of [EGK]-E-H-K-[EKS]">
    <location>
        <begin position="372"/>
        <end position="416"/>
    </location>
</feature>
<feature type="region of interest" description="5 X 5 AA tandem repeats of K-[GAV]-K-[KH]-[DKEH]">
    <location>
        <begin position="417"/>
        <end position="441"/>
    </location>
</feature>
<feature type="region of interest" description="Disordered" evidence="1">
    <location>
        <begin position="520"/>
        <end position="678"/>
    </location>
</feature>
<feature type="compositionally biased region" description="Basic and acidic residues" evidence="1">
    <location>
        <begin position="56"/>
        <end position="79"/>
    </location>
</feature>
<feature type="compositionally biased region" description="Polar residues" evidence="1">
    <location>
        <begin position="80"/>
        <end position="107"/>
    </location>
</feature>
<feature type="compositionally biased region" description="Basic and acidic residues" evidence="1">
    <location>
        <begin position="109"/>
        <end position="120"/>
    </location>
</feature>
<feature type="compositionally biased region" description="Basic residues" evidence="1">
    <location>
        <begin position="121"/>
        <end position="165"/>
    </location>
</feature>
<feature type="compositionally biased region" description="Basic and acidic residues" evidence="1">
    <location>
        <begin position="231"/>
        <end position="329"/>
    </location>
</feature>
<feature type="compositionally biased region" description="Basic and acidic residues" evidence="1">
    <location>
        <begin position="371"/>
        <end position="411"/>
    </location>
</feature>
<feature type="compositionally biased region" description="Basic residues" evidence="1">
    <location>
        <begin position="412"/>
        <end position="443"/>
    </location>
</feature>
<feature type="compositionally biased region" description="Basic and acidic residues" evidence="1">
    <location>
        <begin position="532"/>
        <end position="565"/>
    </location>
</feature>
<feature type="compositionally biased region" description="Acidic residues" evidence="1">
    <location>
        <begin position="566"/>
        <end position="663"/>
    </location>
</feature>
<feature type="compositionally biased region" description="Basic residues" evidence="1">
    <location>
        <begin position="667"/>
        <end position="678"/>
    </location>
</feature>